<sequence length="734" mass="82415">MASRFPKFSQGLSQDPTTRRIWFGIATAHDFESHDDMTEERLYQKIFASHFGQLAIIFLWTSGNLFHVAWQGNFEAWGQDPLHVRPIAHAIWDPHFGQPAVEAFTRGGASGPVNIAYSGVYQWWYTIGLRTNQDLYNGALFLVILSSISLIAGWLHLQPKWKPKVSWFKNAESRLNHHLSGLFGVSSLAWTGHLVHVAIPESRGEHVRWDNFLTKLPHPEGLGPFFAGQWNIYAQNVDSSNHAFGTSQGAGTAILTFIGGFHPQTQSLWLTDIAHHHLAIAVVFIIAGHMYRTNFGIGHSIKEILETHTPPGGRLGRGHKGLYDTINNSLHFQLGLALASLGVITSLVAQHMYSLPPYAFLAQDFTTQAALYTHHQYIAGFIMTGAFAHGAIFFIRDYNPEQNKDNVLARMLEHKEAIISHLSWASLFLGFHTLGLYVHNDVMLAFGTPEKQILIEPIFAQWIQSAHGKALYGFDVLLSSTNNPAFNAGQSIWLPGWLDAINNNSNSLFLTIGPGDFLVHHAIALGLHTTTLILVKGALDARGSKLMPDKKEFGYSFPCDGPGRGGTCDISAWDAFYLAVFWMLNTIGWVTFYWHWKHITLWQGNAAQFNESSTYLMGWLRDYLWLNSSQLINGYNPFGMNSLSVWAWMFLFGHLVWATGFMFLISWRGYWQELIETLAWAHERTPLANLVRWKDKPVALSIVQARLVGLAHFSVGYIFTYAAFLIASTSGKFG</sequence>
<keyword id="KW-0004">4Fe-4S</keyword>
<keyword id="KW-0148">Chlorophyll</keyword>
<keyword id="KW-0150">Chloroplast</keyword>
<keyword id="KW-0157">Chromophore</keyword>
<keyword id="KW-0249">Electron transport</keyword>
<keyword id="KW-0408">Iron</keyword>
<keyword id="KW-0411">Iron-sulfur</keyword>
<keyword id="KW-0460">Magnesium</keyword>
<keyword id="KW-0472">Membrane</keyword>
<keyword id="KW-0479">Metal-binding</keyword>
<keyword id="KW-0560">Oxidoreductase</keyword>
<keyword id="KW-0602">Photosynthesis</keyword>
<keyword id="KW-0603">Photosystem I</keyword>
<keyword id="KW-0934">Plastid</keyword>
<keyword id="KW-0793">Thylakoid</keyword>
<keyword id="KW-0812">Transmembrane</keyword>
<keyword id="KW-1133">Transmembrane helix</keyword>
<keyword id="KW-0813">Transport</keyword>
<proteinExistence type="inferred from homology"/>
<evidence type="ECO:0000255" key="1">
    <source>
        <dbReference type="HAMAP-Rule" id="MF_00482"/>
    </source>
</evidence>
<name>PSAB_MARPO</name>
<protein>
    <recommendedName>
        <fullName evidence="1">Photosystem I P700 chlorophyll a apoprotein A2</fullName>
        <ecNumber evidence="1">1.97.1.12</ecNumber>
    </recommendedName>
    <alternativeName>
        <fullName evidence="1">PSI-B</fullName>
    </alternativeName>
    <alternativeName>
        <fullName evidence="1">PsaB</fullName>
    </alternativeName>
</protein>
<reference key="1">
    <citation type="journal article" date="1986" name="Nature">
        <title>Chloroplast gene organization deduced from complete sequence of liverwort Marchantia polymorpha chloroplast DNA.</title>
        <authorList>
            <person name="Ohyama K."/>
            <person name="Fukuzawa H."/>
            <person name="Kohchi T."/>
            <person name="Shirai H."/>
            <person name="Sano T."/>
            <person name="Sano S."/>
            <person name="Umesono K."/>
            <person name="Shiki Y."/>
            <person name="Takeuchi M."/>
            <person name="Chang Z."/>
            <person name="Aota S."/>
            <person name="Inokuchi H."/>
            <person name="Ozeki H."/>
        </authorList>
    </citation>
    <scope>NUCLEOTIDE SEQUENCE [LARGE SCALE GENOMIC DNA]</scope>
</reference>
<reference key="2">
    <citation type="journal article" date="1984" name="Nucleic Acids Res.">
        <title>Nucleotide sequence of Marchantia polymorpha chloroplast DNA: a region possibly encoding three tRNAs and three proteins including a homologue of E. coli ribosomal protein S14.</title>
        <authorList>
            <person name="Umesono K."/>
            <person name="Inokuchi H."/>
            <person name="Ohyama K."/>
            <person name="Ozeki H."/>
        </authorList>
    </citation>
    <scope>NUCLEOTIDE SEQUENCE [GENOMIC DNA]</scope>
</reference>
<reference key="3">
    <citation type="journal article" date="1988" name="J. Mol. Biol.">
        <title>Structure and organization of Marchantia polymorpha chloroplast genome. II. Gene organization of the large single copy region from rps'12 to atpB.</title>
        <authorList>
            <person name="Umesono K."/>
            <person name="Inokuchi H."/>
            <person name="Shiki Y."/>
            <person name="Takeuchi M."/>
            <person name="Chang Z."/>
            <person name="Fukuzawa H."/>
            <person name="Kohchi T."/>
            <person name="Shirai H."/>
            <person name="Ohyama K."/>
            <person name="Ozeki H."/>
        </authorList>
    </citation>
    <scope>NUCLEOTIDE SEQUENCE [GENOMIC DNA]</scope>
</reference>
<comment type="function">
    <text evidence="1">PsaA and PsaB bind P700, the primary electron donor of photosystem I (PSI), as well as the electron acceptors A0, A1 and FX. PSI is a plastocyanin-ferredoxin oxidoreductase, converting photonic excitation into a charge separation, which transfers an electron from the donor P700 chlorophyll pair to the spectroscopically characterized acceptors A0, A1, FX, FA and FB in turn. Oxidized P700 is reduced on the lumenal side of the thylakoid membrane by plastocyanin.</text>
</comment>
<comment type="catalytic activity">
    <reaction evidence="1">
        <text>reduced [plastocyanin] + hnu + oxidized [2Fe-2S]-[ferredoxin] = oxidized [plastocyanin] + reduced [2Fe-2S]-[ferredoxin]</text>
        <dbReference type="Rhea" id="RHEA:30407"/>
        <dbReference type="Rhea" id="RHEA-COMP:10000"/>
        <dbReference type="Rhea" id="RHEA-COMP:10001"/>
        <dbReference type="Rhea" id="RHEA-COMP:10039"/>
        <dbReference type="Rhea" id="RHEA-COMP:10040"/>
        <dbReference type="ChEBI" id="CHEBI:29036"/>
        <dbReference type="ChEBI" id="CHEBI:30212"/>
        <dbReference type="ChEBI" id="CHEBI:33737"/>
        <dbReference type="ChEBI" id="CHEBI:33738"/>
        <dbReference type="ChEBI" id="CHEBI:49552"/>
        <dbReference type="EC" id="1.97.1.12"/>
    </reaction>
</comment>
<comment type="cofactor">
    <text evidence="1">P700 is a chlorophyll a/chlorophyll a' dimer, A0 is one or more chlorophyll a, A1 is one or both phylloquinones and FX is a shared 4Fe-4S iron-sulfur center.</text>
</comment>
<comment type="subunit">
    <text evidence="1">The PsaA/B heterodimer binds the P700 chlorophyll special pair and subsequent electron acceptors. PSI consists of a core antenna complex that captures photons, and an electron transfer chain that converts photonic excitation into a charge separation. The eukaryotic PSI reaction center is composed of at least 11 subunits.</text>
</comment>
<comment type="subcellular location">
    <subcellularLocation>
        <location evidence="1">Plastid</location>
        <location evidence="1">Chloroplast thylakoid membrane</location>
        <topology evidence="1">Multi-pass membrane protein</topology>
    </subcellularLocation>
</comment>
<comment type="similarity">
    <text evidence="1">Belongs to the PsaA/PsaB family.</text>
</comment>
<dbReference type="EC" id="1.97.1.12" evidence="1"/>
<dbReference type="EMBL" id="X04465">
    <property type="protein sequence ID" value="CAA28084.1"/>
    <property type="molecule type" value="Genomic_DNA"/>
</dbReference>
<dbReference type="EMBL" id="X01647">
    <property type="protein sequence ID" value="CAA25804.1"/>
    <property type="molecule type" value="Genomic_DNA"/>
</dbReference>
<dbReference type="PIR" id="A03467">
    <property type="entry name" value="A2LVP7"/>
</dbReference>
<dbReference type="RefSeq" id="NP_039298.1">
    <property type="nucleotide sequence ID" value="NC_001319.1"/>
</dbReference>
<dbReference type="SMR" id="P06408"/>
<dbReference type="GeneID" id="2702547"/>
<dbReference type="GO" id="GO:0009535">
    <property type="term" value="C:chloroplast thylakoid membrane"/>
    <property type="evidence" value="ECO:0007669"/>
    <property type="project" value="UniProtKB-SubCell"/>
</dbReference>
<dbReference type="GO" id="GO:0009522">
    <property type="term" value="C:photosystem I"/>
    <property type="evidence" value="ECO:0007669"/>
    <property type="project" value="UniProtKB-KW"/>
</dbReference>
<dbReference type="GO" id="GO:0051539">
    <property type="term" value="F:4 iron, 4 sulfur cluster binding"/>
    <property type="evidence" value="ECO:0007669"/>
    <property type="project" value="UniProtKB-KW"/>
</dbReference>
<dbReference type="GO" id="GO:0016168">
    <property type="term" value="F:chlorophyll binding"/>
    <property type="evidence" value="ECO:0007669"/>
    <property type="project" value="UniProtKB-KW"/>
</dbReference>
<dbReference type="GO" id="GO:0009055">
    <property type="term" value="F:electron transfer activity"/>
    <property type="evidence" value="ECO:0007669"/>
    <property type="project" value="UniProtKB-UniRule"/>
</dbReference>
<dbReference type="GO" id="GO:0000287">
    <property type="term" value="F:magnesium ion binding"/>
    <property type="evidence" value="ECO:0007669"/>
    <property type="project" value="UniProtKB-UniRule"/>
</dbReference>
<dbReference type="GO" id="GO:0016491">
    <property type="term" value="F:oxidoreductase activity"/>
    <property type="evidence" value="ECO:0007669"/>
    <property type="project" value="UniProtKB-KW"/>
</dbReference>
<dbReference type="GO" id="GO:0015979">
    <property type="term" value="P:photosynthesis"/>
    <property type="evidence" value="ECO:0007669"/>
    <property type="project" value="UniProtKB-UniRule"/>
</dbReference>
<dbReference type="FunFam" id="1.20.1130.10:FF:000001">
    <property type="entry name" value="Photosystem I P700 chlorophyll a apoprotein A2"/>
    <property type="match status" value="1"/>
</dbReference>
<dbReference type="Gene3D" id="1.20.1130.10">
    <property type="entry name" value="Photosystem I PsaA/PsaB"/>
    <property type="match status" value="1"/>
</dbReference>
<dbReference type="HAMAP" id="MF_00482">
    <property type="entry name" value="PSI_PsaB"/>
    <property type="match status" value="1"/>
</dbReference>
<dbReference type="InterPro" id="IPR001280">
    <property type="entry name" value="PSI_PsaA/B"/>
</dbReference>
<dbReference type="InterPro" id="IPR020586">
    <property type="entry name" value="PSI_PsaA/B_CS"/>
</dbReference>
<dbReference type="InterPro" id="IPR036408">
    <property type="entry name" value="PSI_PsaA/B_sf"/>
</dbReference>
<dbReference type="InterPro" id="IPR006244">
    <property type="entry name" value="PSI_PsaB"/>
</dbReference>
<dbReference type="NCBIfam" id="TIGR01336">
    <property type="entry name" value="psaB"/>
    <property type="match status" value="1"/>
</dbReference>
<dbReference type="PANTHER" id="PTHR30128">
    <property type="entry name" value="OUTER MEMBRANE PROTEIN, OMPA-RELATED"/>
    <property type="match status" value="1"/>
</dbReference>
<dbReference type="PANTHER" id="PTHR30128:SF19">
    <property type="entry name" value="PHOTOSYSTEM I P700 CHLOROPHYLL A APOPROTEIN A1-RELATED"/>
    <property type="match status" value="1"/>
</dbReference>
<dbReference type="Pfam" id="PF00223">
    <property type="entry name" value="PsaA_PsaB"/>
    <property type="match status" value="1"/>
</dbReference>
<dbReference type="PIRSF" id="PIRSF002905">
    <property type="entry name" value="PSI_A"/>
    <property type="match status" value="1"/>
</dbReference>
<dbReference type="PRINTS" id="PR00257">
    <property type="entry name" value="PHOTSYSPSAAB"/>
</dbReference>
<dbReference type="SUPFAM" id="SSF81558">
    <property type="entry name" value="Photosystem I subunits PsaA/PsaB"/>
    <property type="match status" value="1"/>
</dbReference>
<dbReference type="PROSITE" id="PS00419">
    <property type="entry name" value="PHOTOSYSTEM_I_PSAAB"/>
    <property type="match status" value="1"/>
</dbReference>
<geneLocation type="chloroplast"/>
<gene>
    <name evidence="1" type="primary">psaB</name>
</gene>
<organism>
    <name type="scientific">Marchantia polymorpha</name>
    <name type="common">Common liverwort</name>
    <name type="synonym">Marchantia aquatica</name>
    <dbReference type="NCBI Taxonomy" id="3197"/>
    <lineage>
        <taxon>Eukaryota</taxon>
        <taxon>Viridiplantae</taxon>
        <taxon>Streptophyta</taxon>
        <taxon>Embryophyta</taxon>
        <taxon>Marchantiophyta</taxon>
        <taxon>Marchantiopsida</taxon>
        <taxon>Marchantiidae</taxon>
        <taxon>Marchantiales</taxon>
        <taxon>Marchantiaceae</taxon>
        <taxon>Marchantia</taxon>
    </lineage>
</organism>
<feature type="chain" id="PRO_0000088621" description="Photosystem I P700 chlorophyll a apoprotein A2">
    <location>
        <begin position="1"/>
        <end position="734"/>
    </location>
</feature>
<feature type="transmembrane region" description="Helical; Name=I" evidence="1">
    <location>
        <begin position="46"/>
        <end position="69"/>
    </location>
</feature>
<feature type="transmembrane region" description="Helical; Name=II" evidence="1">
    <location>
        <begin position="135"/>
        <end position="158"/>
    </location>
</feature>
<feature type="transmembrane region" description="Helical; Name=III" evidence="1">
    <location>
        <begin position="175"/>
        <end position="199"/>
    </location>
</feature>
<feature type="transmembrane region" description="Helical; Name=IV" evidence="1">
    <location>
        <begin position="273"/>
        <end position="291"/>
    </location>
</feature>
<feature type="transmembrane region" description="Helical; Name=V" evidence="1">
    <location>
        <begin position="330"/>
        <end position="353"/>
    </location>
</feature>
<feature type="transmembrane region" description="Helical; Name=VI" evidence="1">
    <location>
        <begin position="369"/>
        <end position="395"/>
    </location>
</feature>
<feature type="transmembrane region" description="Helical; Name=VII" evidence="1">
    <location>
        <begin position="417"/>
        <end position="439"/>
    </location>
</feature>
<feature type="transmembrane region" description="Helical; Name=VIII" evidence="1">
    <location>
        <begin position="517"/>
        <end position="535"/>
    </location>
</feature>
<feature type="transmembrane region" description="Helical; Name=IX" evidence="1">
    <location>
        <begin position="575"/>
        <end position="596"/>
    </location>
</feature>
<feature type="transmembrane region" description="Helical; Name=X" evidence="1">
    <location>
        <begin position="643"/>
        <end position="665"/>
    </location>
</feature>
<feature type="transmembrane region" description="Helical; Name=XI" evidence="1">
    <location>
        <begin position="707"/>
        <end position="727"/>
    </location>
</feature>
<feature type="binding site" evidence="1">
    <location>
        <position position="559"/>
    </location>
    <ligand>
        <name>[4Fe-4S] cluster</name>
        <dbReference type="ChEBI" id="CHEBI:49883"/>
        <note>ligand shared between dimeric partners</note>
    </ligand>
</feature>
<feature type="binding site" evidence="1">
    <location>
        <position position="568"/>
    </location>
    <ligand>
        <name>[4Fe-4S] cluster</name>
        <dbReference type="ChEBI" id="CHEBI:49883"/>
        <note>ligand shared between dimeric partners</note>
    </ligand>
</feature>
<feature type="binding site" description="axial binding residue" evidence="1">
    <location>
        <position position="654"/>
    </location>
    <ligand>
        <name>chlorophyll a</name>
        <dbReference type="ChEBI" id="CHEBI:58416"/>
        <label>B1</label>
    </ligand>
    <ligandPart>
        <name>Mg</name>
        <dbReference type="ChEBI" id="CHEBI:25107"/>
    </ligandPart>
</feature>
<feature type="binding site" description="axial binding residue" evidence="1">
    <location>
        <position position="662"/>
    </location>
    <ligand>
        <name>chlorophyll a</name>
        <dbReference type="ChEBI" id="CHEBI:58416"/>
        <label>B3</label>
    </ligand>
    <ligandPart>
        <name>Mg</name>
        <dbReference type="ChEBI" id="CHEBI:25107"/>
    </ligandPart>
</feature>
<feature type="binding site" evidence="1">
    <location>
        <position position="670"/>
    </location>
    <ligand>
        <name>chlorophyll a</name>
        <dbReference type="ChEBI" id="CHEBI:58416"/>
        <label>B3</label>
    </ligand>
</feature>
<feature type="binding site" evidence="1">
    <location>
        <position position="671"/>
    </location>
    <ligand>
        <name>phylloquinone</name>
        <dbReference type="ChEBI" id="CHEBI:18067"/>
        <label>B</label>
    </ligand>
</feature>
<accession>P06408</accession>